<proteinExistence type="inferred from homology"/>
<keyword id="KW-0067">ATP-binding</keyword>
<keyword id="KW-0997">Cell inner membrane</keyword>
<keyword id="KW-1003">Cell membrane</keyword>
<keyword id="KW-0472">Membrane</keyword>
<keyword id="KW-0547">Nucleotide-binding</keyword>
<keyword id="KW-1278">Translocase</keyword>
<keyword id="KW-0813">Transport</keyword>
<evidence type="ECO:0000255" key="1">
    <source>
        <dbReference type="HAMAP-Rule" id="MF_01718"/>
    </source>
</evidence>
<feature type="chain" id="PRO_0000269617" description="Hemin import ATP-binding protein HmuV">
    <location>
        <begin position="1"/>
        <end position="264"/>
    </location>
</feature>
<feature type="domain" description="ABC transporter" evidence="1">
    <location>
        <begin position="2"/>
        <end position="241"/>
    </location>
</feature>
<feature type="binding site" evidence="1">
    <location>
        <begin position="34"/>
        <end position="41"/>
    </location>
    <ligand>
        <name>ATP</name>
        <dbReference type="ChEBI" id="CHEBI:30616"/>
    </ligand>
</feature>
<protein>
    <recommendedName>
        <fullName evidence="1">Hemin import ATP-binding protein HmuV</fullName>
        <ecNumber evidence="1">7.6.2.-</ecNumber>
    </recommendedName>
</protein>
<sequence length="264" mass="27915">MIEVSGVSVRLSGKTIISDVAFTAKAGELTAIAGPNGSGKTTTMKAISGELAYGGSVRIGGDEVKGLKPWQLAAIRGVLPQASTISFPFTVREIVRMGLTSGLNLHPDKAEQTAAAALASVDLTGFEGRFYQELSGGEQQRVQLARVLCQIAEPVVDGKPCWLLLDEPVSSLDISHQLTIMTLARNFCERGGGVIAVMHDLNLTALFADRIVLMKSGRLAAPAASFEVLTDETMLSVFGLRVRINQVPADGTPFVLAHSAVSRP</sequence>
<name>HMUV_RHILE</name>
<reference key="1">
    <citation type="journal article" date="2001" name="Mol. Microbiol.">
        <title>The Rhizobium leguminosarum tonB gene is required for the uptake of siderophore and haem as sources of iron.</title>
        <authorList>
            <person name="Wexler M."/>
            <person name="Yeoman K.H."/>
            <person name="Stevens J.B."/>
            <person name="de Luca N.G."/>
            <person name="Sawers G."/>
            <person name="Johnston A.W.B."/>
        </authorList>
    </citation>
    <scope>NUCLEOTIDE SEQUENCE [GENOMIC DNA]</scope>
    <source>
        <strain>8401</strain>
    </source>
</reference>
<dbReference type="EC" id="7.6.2.-" evidence="1"/>
<dbReference type="EMBL" id="AJ310723">
    <property type="protein sequence ID" value="CAC34395.1"/>
    <property type="molecule type" value="Genomic_DNA"/>
</dbReference>
<dbReference type="SMR" id="Q9AE30"/>
<dbReference type="eggNOG" id="COG4559">
    <property type="taxonomic scope" value="Bacteria"/>
</dbReference>
<dbReference type="GO" id="GO:0005886">
    <property type="term" value="C:plasma membrane"/>
    <property type="evidence" value="ECO:0007669"/>
    <property type="project" value="UniProtKB-SubCell"/>
</dbReference>
<dbReference type="GO" id="GO:0005524">
    <property type="term" value="F:ATP binding"/>
    <property type="evidence" value="ECO:0007669"/>
    <property type="project" value="UniProtKB-KW"/>
</dbReference>
<dbReference type="GO" id="GO:0016887">
    <property type="term" value="F:ATP hydrolysis activity"/>
    <property type="evidence" value="ECO:0007669"/>
    <property type="project" value="InterPro"/>
</dbReference>
<dbReference type="CDD" id="cd03214">
    <property type="entry name" value="ABC_Iron-Siderophores_B12_Hemin"/>
    <property type="match status" value="1"/>
</dbReference>
<dbReference type="Gene3D" id="3.40.50.300">
    <property type="entry name" value="P-loop containing nucleotide triphosphate hydrolases"/>
    <property type="match status" value="1"/>
</dbReference>
<dbReference type="InterPro" id="IPR003593">
    <property type="entry name" value="AAA+_ATPase"/>
</dbReference>
<dbReference type="InterPro" id="IPR003439">
    <property type="entry name" value="ABC_transporter-like_ATP-bd"/>
</dbReference>
<dbReference type="InterPro" id="IPR017871">
    <property type="entry name" value="ABC_transporter-like_CS"/>
</dbReference>
<dbReference type="InterPro" id="IPR027417">
    <property type="entry name" value="P-loop_NTPase"/>
</dbReference>
<dbReference type="NCBIfam" id="NF010068">
    <property type="entry name" value="PRK13548.1"/>
    <property type="match status" value="1"/>
</dbReference>
<dbReference type="PANTHER" id="PTHR42794">
    <property type="entry name" value="HEMIN IMPORT ATP-BINDING PROTEIN HMUV"/>
    <property type="match status" value="1"/>
</dbReference>
<dbReference type="PANTHER" id="PTHR42794:SF1">
    <property type="entry name" value="HEMIN IMPORT ATP-BINDING PROTEIN HMUV"/>
    <property type="match status" value="1"/>
</dbReference>
<dbReference type="Pfam" id="PF00005">
    <property type="entry name" value="ABC_tran"/>
    <property type="match status" value="1"/>
</dbReference>
<dbReference type="SMART" id="SM00382">
    <property type="entry name" value="AAA"/>
    <property type="match status" value="1"/>
</dbReference>
<dbReference type="SUPFAM" id="SSF52540">
    <property type="entry name" value="P-loop containing nucleoside triphosphate hydrolases"/>
    <property type="match status" value="1"/>
</dbReference>
<dbReference type="PROSITE" id="PS00211">
    <property type="entry name" value="ABC_TRANSPORTER_1"/>
    <property type="match status" value="1"/>
</dbReference>
<dbReference type="PROSITE" id="PS50893">
    <property type="entry name" value="ABC_TRANSPORTER_2"/>
    <property type="match status" value="1"/>
</dbReference>
<dbReference type="PROSITE" id="PS51261">
    <property type="entry name" value="HMUV"/>
    <property type="match status" value="1"/>
</dbReference>
<accession>Q9AE30</accession>
<gene>
    <name evidence="1" type="primary">hmuV</name>
</gene>
<comment type="function">
    <text evidence="1">Part of the ABC transporter complex HmuTUV involved in hemin import. Responsible for energy coupling to the transport system.</text>
</comment>
<comment type="subunit">
    <text evidence="1">The complex is composed of two ATP-binding proteins (HmuV), two transmembrane proteins (HmuU) and a solute-binding protein (HmuT).</text>
</comment>
<comment type="subcellular location">
    <subcellularLocation>
        <location evidence="1">Cell inner membrane</location>
        <topology evidence="1">Peripheral membrane protein</topology>
    </subcellularLocation>
</comment>
<comment type="similarity">
    <text evidence="1">Belongs to the ABC transporter superfamily. Heme (hemin) importer (TC 3.A.1.14.5) family.</text>
</comment>
<organism>
    <name type="scientific">Rhizobium leguminosarum</name>
    <dbReference type="NCBI Taxonomy" id="384"/>
    <lineage>
        <taxon>Bacteria</taxon>
        <taxon>Pseudomonadati</taxon>
        <taxon>Pseudomonadota</taxon>
        <taxon>Alphaproteobacteria</taxon>
        <taxon>Hyphomicrobiales</taxon>
        <taxon>Rhizobiaceae</taxon>
        <taxon>Rhizobium/Agrobacterium group</taxon>
        <taxon>Rhizobium</taxon>
    </lineage>
</organism>